<proteinExistence type="evidence at protein level"/>
<gene>
    <name type="primary">GLTP</name>
</gene>
<reference key="1">
    <citation type="journal article" date="2004" name="Biochemistry">
        <title>Human glycolipid transfer protein: probing conformation using fluorescence spectroscopy.</title>
        <authorList>
            <person name="Li X.-M."/>
            <person name="Malakhova M.L."/>
            <person name="Lin X."/>
            <person name="Pike H.M."/>
            <person name="Chung T."/>
            <person name="Molotkovsky J.G."/>
            <person name="Brown R.E."/>
        </authorList>
    </citation>
    <scope>NUCLEOTIDE SEQUENCE [MRNA]</scope>
    <source>
        <tissue>Skin fibroblast</tissue>
    </source>
</reference>
<reference key="2">
    <citation type="journal article" date="2008" name="BMC Genomics">
        <title>Human glycolipid transfer protein (GLTP) genes: organization, transcriptional status and evolution.</title>
        <authorList>
            <person name="Zou X."/>
            <person name="Chung T."/>
            <person name="Lin X."/>
            <person name="Malakhova M.L."/>
            <person name="Pike H.M."/>
            <person name="Brown R.E."/>
        </authorList>
    </citation>
    <scope>NUCLEOTIDE SEQUENCE [MRNA]</scope>
    <scope>FUNCTION</scope>
    <scope>TISSUE SPECIFICITY</scope>
    <source>
        <tissue>Brain</tissue>
    </source>
</reference>
<reference key="3">
    <citation type="journal article" date="2004" name="Nat. Genet.">
        <title>Complete sequencing and characterization of 21,243 full-length human cDNAs.</title>
        <authorList>
            <person name="Ota T."/>
            <person name="Suzuki Y."/>
            <person name="Nishikawa T."/>
            <person name="Otsuki T."/>
            <person name="Sugiyama T."/>
            <person name="Irie R."/>
            <person name="Wakamatsu A."/>
            <person name="Hayashi K."/>
            <person name="Sato H."/>
            <person name="Nagai K."/>
            <person name="Kimura K."/>
            <person name="Makita H."/>
            <person name="Sekine M."/>
            <person name="Obayashi M."/>
            <person name="Nishi T."/>
            <person name="Shibahara T."/>
            <person name="Tanaka T."/>
            <person name="Ishii S."/>
            <person name="Yamamoto J."/>
            <person name="Saito K."/>
            <person name="Kawai Y."/>
            <person name="Isono Y."/>
            <person name="Nakamura Y."/>
            <person name="Nagahari K."/>
            <person name="Murakami K."/>
            <person name="Yasuda T."/>
            <person name="Iwayanagi T."/>
            <person name="Wagatsuma M."/>
            <person name="Shiratori A."/>
            <person name="Sudo H."/>
            <person name="Hosoiri T."/>
            <person name="Kaku Y."/>
            <person name="Kodaira H."/>
            <person name="Kondo H."/>
            <person name="Sugawara M."/>
            <person name="Takahashi M."/>
            <person name="Kanda K."/>
            <person name="Yokoi T."/>
            <person name="Furuya T."/>
            <person name="Kikkawa E."/>
            <person name="Omura Y."/>
            <person name="Abe K."/>
            <person name="Kamihara K."/>
            <person name="Katsuta N."/>
            <person name="Sato K."/>
            <person name="Tanikawa M."/>
            <person name="Yamazaki M."/>
            <person name="Ninomiya K."/>
            <person name="Ishibashi T."/>
            <person name="Yamashita H."/>
            <person name="Murakawa K."/>
            <person name="Fujimori K."/>
            <person name="Tanai H."/>
            <person name="Kimata M."/>
            <person name="Watanabe M."/>
            <person name="Hiraoka S."/>
            <person name="Chiba Y."/>
            <person name="Ishida S."/>
            <person name="Ono Y."/>
            <person name="Takiguchi S."/>
            <person name="Watanabe S."/>
            <person name="Yosida M."/>
            <person name="Hotuta T."/>
            <person name="Kusano J."/>
            <person name="Kanehori K."/>
            <person name="Takahashi-Fujii A."/>
            <person name="Hara H."/>
            <person name="Tanase T.-O."/>
            <person name="Nomura Y."/>
            <person name="Togiya S."/>
            <person name="Komai F."/>
            <person name="Hara R."/>
            <person name="Takeuchi K."/>
            <person name="Arita M."/>
            <person name="Imose N."/>
            <person name="Musashino K."/>
            <person name="Yuuki H."/>
            <person name="Oshima A."/>
            <person name="Sasaki N."/>
            <person name="Aotsuka S."/>
            <person name="Yoshikawa Y."/>
            <person name="Matsunawa H."/>
            <person name="Ichihara T."/>
            <person name="Shiohata N."/>
            <person name="Sano S."/>
            <person name="Moriya S."/>
            <person name="Momiyama H."/>
            <person name="Satoh N."/>
            <person name="Takami S."/>
            <person name="Terashima Y."/>
            <person name="Suzuki O."/>
            <person name="Nakagawa S."/>
            <person name="Senoh A."/>
            <person name="Mizoguchi H."/>
            <person name="Goto Y."/>
            <person name="Shimizu F."/>
            <person name="Wakebe H."/>
            <person name="Hishigaki H."/>
            <person name="Watanabe T."/>
            <person name="Sugiyama A."/>
            <person name="Takemoto M."/>
            <person name="Kawakami B."/>
            <person name="Yamazaki M."/>
            <person name="Watanabe K."/>
            <person name="Kumagai A."/>
            <person name="Itakura S."/>
            <person name="Fukuzumi Y."/>
            <person name="Fujimori Y."/>
            <person name="Komiyama M."/>
            <person name="Tashiro H."/>
            <person name="Tanigami A."/>
            <person name="Fujiwara T."/>
            <person name="Ono T."/>
            <person name="Yamada K."/>
            <person name="Fujii Y."/>
            <person name="Ozaki K."/>
            <person name="Hirao M."/>
            <person name="Ohmori Y."/>
            <person name="Kawabata A."/>
            <person name="Hikiji T."/>
            <person name="Kobatake N."/>
            <person name="Inagaki H."/>
            <person name="Ikema Y."/>
            <person name="Okamoto S."/>
            <person name="Okitani R."/>
            <person name="Kawakami T."/>
            <person name="Noguchi S."/>
            <person name="Itoh T."/>
            <person name="Shigeta K."/>
            <person name="Senba T."/>
            <person name="Matsumura K."/>
            <person name="Nakajima Y."/>
            <person name="Mizuno T."/>
            <person name="Morinaga M."/>
            <person name="Sasaki M."/>
            <person name="Togashi T."/>
            <person name="Oyama M."/>
            <person name="Hata H."/>
            <person name="Watanabe M."/>
            <person name="Komatsu T."/>
            <person name="Mizushima-Sugano J."/>
            <person name="Satoh T."/>
            <person name="Shirai Y."/>
            <person name="Takahashi Y."/>
            <person name="Nakagawa K."/>
            <person name="Okumura K."/>
            <person name="Nagase T."/>
            <person name="Nomura N."/>
            <person name="Kikuchi H."/>
            <person name="Masuho Y."/>
            <person name="Yamashita R."/>
            <person name="Nakai K."/>
            <person name="Yada T."/>
            <person name="Nakamura Y."/>
            <person name="Ohara O."/>
            <person name="Isogai T."/>
            <person name="Sugano S."/>
        </authorList>
    </citation>
    <scope>NUCLEOTIDE SEQUENCE [LARGE SCALE MRNA]</scope>
    <source>
        <tissue>Caudate nucleus</tissue>
    </source>
</reference>
<reference key="4">
    <citation type="submission" date="2005-07" db="EMBL/GenBank/DDBJ databases">
        <authorList>
            <person name="Mural R.J."/>
            <person name="Istrail S."/>
            <person name="Sutton G.G."/>
            <person name="Florea L."/>
            <person name="Halpern A.L."/>
            <person name="Mobarry C.M."/>
            <person name="Lippert R."/>
            <person name="Walenz B."/>
            <person name="Shatkay H."/>
            <person name="Dew I."/>
            <person name="Miller J.R."/>
            <person name="Flanigan M.J."/>
            <person name="Edwards N.J."/>
            <person name="Bolanos R."/>
            <person name="Fasulo D."/>
            <person name="Halldorsson B.V."/>
            <person name="Hannenhalli S."/>
            <person name="Turner R."/>
            <person name="Yooseph S."/>
            <person name="Lu F."/>
            <person name="Nusskern D.R."/>
            <person name="Shue B.C."/>
            <person name="Zheng X.H."/>
            <person name="Zhong F."/>
            <person name="Delcher A.L."/>
            <person name="Huson D.H."/>
            <person name="Kravitz S.A."/>
            <person name="Mouchard L."/>
            <person name="Reinert K."/>
            <person name="Remington K.A."/>
            <person name="Clark A.G."/>
            <person name="Waterman M.S."/>
            <person name="Eichler E.E."/>
            <person name="Adams M.D."/>
            <person name="Hunkapiller M.W."/>
            <person name="Myers E.W."/>
            <person name="Venter J.C."/>
        </authorList>
    </citation>
    <scope>NUCLEOTIDE SEQUENCE [LARGE SCALE GENOMIC DNA]</scope>
</reference>
<reference key="5">
    <citation type="journal article" date="2004" name="Genome Res.">
        <title>The status, quality, and expansion of the NIH full-length cDNA project: the Mammalian Gene Collection (MGC).</title>
        <authorList>
            <consortium name="The MGC Project Team"/>
        </authorList>
    </citation>
    <scope>NUCLEOTIDE SEQUENCE [LARGE SCALE MRNA]</scope>
    <source>
        <tissue>Placenta</tissue>
    </source>
</reference>
<reference key="6">
    <citation type="journal article" date="2004" name="Biochemistry">
        <title>Glycolipid transfer protein mediated transfer of glycosphingolipids between membranes: a model for action based on kinetic and thermodynamic analyses.</title>
        <authorList>
            <person name="Rao C.S."/>
            <person name="Lin X."/>
            <person name="Pike H.M."/>
            <person name="Molotkovsky J.G."/>
            <person name="Brown R.E."/>
        </authorList>
    </citation>
    <scope>FUNCTION</scope>
</reference>
<reference key="7">
    <citation type="journal article" date="2007" name="Biochim. Biophys. Acta">
        <title>Human glycolipid transfer protein -- intracellular localization and effects on the sphingolipid synthesis.</title>
        <authorList>
            <person name="Tuuf J."/>
            <person name="Mattjus P."/>
        </authorList>
    </citation>
    <scope>FUNCTION</scope>
    <scope>SUBCELLULAR LOCATION</scope>
    <scope>TISSUE SPECIFICITY</scope>
</reference>
<reference key="8">
    <citation type="journal article" date="2011" name="BMC Syst. Biol.">
        <title>Initial characterization of the human central proteome.</title>
        <authorList>
            <person name="Burkard T.R."/>
            <person name="Planyavsky M."/>
            <person name="Kaupe I."/>
            <person name="Breitwieser F.P."/>
            <person name="Buerckstuemmer T."/>
            <person name="Bennett K.L."/>
            <person name="Superti-Furga G."/>
            <person name="Colinge J."/>
        </authorList>
    </citation>
    <scope>IDENTIFICATION BY MASS SPECTROMETRY [LARGE SCALE ANALYSIS]</scope>
</reference>
<reference evidence="9 10" key="9">
    <citation type="journal article" date="2004" name="Nature">
        <title>Structural basis for glycosphingolipid transfer specificity.</title>
        <authorList>
            <person name="Malinina L."/>
            <person name="Malakhova M.L."/>
            <person name="Teplov A."/>
            <person name="Brown R.E."/>
            <person name="Patel D.J."/>
        </authorList>
    </citation>
    <scope>X-RAY CRYSTALLOGRAPHY (1.6 ANGSTROMS) OF APOPROTEIN AND IN COMPLEX WITH A LACTOSYLCERAMIDE</scope>
    <scope>FUNCTION</scope>
    <scope>MUTAGENESIS OF ILE-45; ASP-48; ASN-52; LYS-55; TRP-96; PHE-103; LEU-136; HIS-140; PHE-148; LEU-165; PHE-183 AND TYR-207</scope>
</reference>
<reference key="10">
    <citation type="journal article" date="2018" name="Autophagy">
        <title>CPTP: A sphingolipid transfer protein that regulates autophagy and inflammasome activation.</title>
        <authorList>
            <person name="Mishra S.K."/>
            <person name="Gao Y.G."/>
            <person name="Deng Y."/>
            <person name="Chalfant C.E."/>
            <person name="Hinchcliffe E.H."/>
            <person name="Brown R.E."/>
        </authorList>
    </citation>
    <scope>MUTAGENESIS OF TRP-96</scope>
</reference>
<reference key="11">
    <citation type="journal article" date="2006" name="PLoS Biol.">
        <title>The liganding of glycolipid transfer protein is controlled by glycolipid acyl structure.</title>
        <authorList>
            <person name="Malinina L."/>
            <person name="Malakhova M.L."/>
            <person name="Kanack A.T."/>
            <person name="Lu M."/>
            <person name="Abagyan R."/>
            <person name="Brown R.E."/>
            <person name="Patel D.J."/>
        </authorList>
    </citation>
    <scope>X-RAY CRYSTALLOGRAPHY (1.85 ANGSTROMS) IN COMPLEXES WITH GLYCOSPHINGOLIPIDS</scope>
    <scope>SUBUNIT</scope>
</reference>
<name>GLTP_HUMAN</name>
<sequence>MALLAEHLLKPLPADKQIETGPFLEAVSHLPPFFDCLGSPVFTPIKADISGNITKIKAVYDTNPAKFRTLQNILEVEKEMYGAEWPKVGATLALMWLKRGLRFIQVFLQSICDGERDENHPNLIRVNATKAYEMALKKYHGWIVQKIFQAALYAAPYKSDFLKALSKGQNVTEEECLEKIRLFLVNYTATIDVIYEMYTQMNAELNYKV</sequence>
<protein>
    <recommendedName>
        <fullName>Glycolipid transfer protein</fullName>
        <shortName>GLTP</shortName>
    </recommendedName>
</protein>
<accession>Q9NZD2</accession>
<accession>Q53Z13</accession>
<accession>Q96J68</accession>
<keyword id="KW-0002">3D-structure</keyword>
<keyword id="KW-0007">Acetylation</keyword>
<keyword id="KW-0963">Cytoplasm</keyword>
<keyword id="KW-0445">Lipid transport</keyword>
<keyword id="KW-1267">Proteomics identification</keyword>
<keyword id="KW-1185">Reference proteome</keyword>
<keyword id="KW-0677">Repeat</keyword>
<keyword id="KW-0813">Transport</keyword>
<evidence type="ECO:0000250" key="1">
    <source>
        <dbReference type="UniProtKB" id="P68266"/>
    </source>
</evidence>
<evidence type="ECO:0000269" key="2">
    <source>
    </source>
</evidence>
<evidence type="ECO:0000269" key="3">
    <source>
    </source>
</evidence>
<evidence type="ECO:0000269" key="4">
    <source>
    </source>
</evidence>
<evidence type="ECO:0000269" key="5">
    <source>
    </source>
</evidence>
<evidence type="ECO:0000269" key="6">
    <source>
    </source>
</evidence>
<evidence type="ECO:0000269" key="7">
    <source>
    </source>
</evidence>
<evidence type="ECO:0000305" key="8"/>
<evidence type="ECO:0007744" key="9">
    <source>
        <dbReference type="PDB" id="1SWX"/>
    </source>
</evidence>
<evidence type="ECO:0007744" key="10">
    <source>
        <dbReference type="PDB" id="1SX6"/>
    </source>
</evidence>
<evidence type="ECO:0007829" key="11">
    <source>
        <dbReference type="PDB" id="1SX6"/>
    </source>
</evidence>
<evidence type="ECO:0007829" key="12">
    <source>
        <dbReference type="PDB" id="3RIC"/>
    </source>
</evidence>
<evidence type="ECO:0007829" key="13">
    <source>
        <dbReference type="PDB" id="3RZN"/>
    </source>
</evidence>
<evidence type="ECO:0007829" key="14">
    <source>
        <dbReference type="PDB" id="4GIX"/>
    </source>
</evidence>
<feature type="initiator methionine" description="Removed" evidence="1">
    <location>
        <position position="1"/>
    </location>
</feature>
<feature type="chain" id="PRO_0000148915" description="Glycolipid transfer protein">
    <location>
        <begin position="2"/>
        <end position="209"/>
    </location>
</feature>
<feature type="repeat" description="1">
    <location>
        <begin position="45"/>
        <end position="55"/>
    </location>
</feature>
<feature type="repeat" description="2">
    <location>
        <begin position="56"/>
        <end position="66"/>
    </location>
</feature>
<feature type="region of interest" description="2 X 12 AA approximate tandem repeats">
    <location>
        <begin position="45"/>
        <end position="66"/>
    </location>
</feature>
<feature type="binding site" evidence="2 10">
    <location>
        <begin position="48"/>
        <end position="55"/>
    </location>
    <ligand>
        <name>beta-D-galactosyl-(1-&gt;4)-beta-D-glucosyl-(1&lt;-&gt;1)-N-[(9Z)-octadecenoyl]-sphing-4-enine</name>
        <dbReference type="ChEBI" id="CHEBI:131557"/>
    </ligand>
</feature>
<feature type="binding site" evidence="2 10">
    <location>
        <position position="140"/>
    </location>
    <ligand>
        <name>beta-D-galactosyl-(1-&gt;4)-beta-D-glucosyl-(1&lt;-&gt;1)-N-[(9Z)-octadecenoyl]-sphing-4-enine</name>
        <dbReference type="ChEBI" id="CHEBI:131557"/>
    </ligand>
</feature>
<feature type="binding site" evidence="2 10">
    <location>
        <position position="207"/>
    </location>
    <ligand>
        <name>beta-D-galactosyl-(1-&gt;4)-beta-D-glucosyl-(1&lt;-&gt;1)-N-[(9Z)-octadecenoyl]-sphing-4-enine</name>
        <dbReference type="ChEBI" id="CHEBI:131557"/>
    </ligand>
</feature>
<feature type="modified residue" description="N-acetylalanine" evidence="1">
    <location>
        <position position="2"/>
    </location>
</feature>
<feature type="mutagenesis site" description="18% decrease in activity." evidence="2">
    <original>I</original>
    <variation>N</variation>
    <location>
        <position position="45"/>
    </location>
</feature>
<feature type="mutagenesis site" description="Significant inactivation; 15% residual activity." evidence="2">
    <original>D</original>
    <variation>V</variation>
    <location>
        <position position="48"/>
    </location>
</feature>
<feature type="mutagenesis site" description="Significant inactivation; 15% residual activity." evidence="2">
    <original>N</original>
    <variation>I</variation>
    <location>
        <position position="52"/>
    </location>
</feature>
<feature type="mutagenesis site" description="No loss of activity; 90-97% residual activity." evidence="2">
    <original>K</original>
    <variation>I</variation>
    <location>
        <position position="55"/>
    </location>
</feature>
<feature type="mutagenesis site" description="Almost complete inactivation; 1-3% residual activity. No effect on autophagy." evidence="2 7">
    <original>W</original>
    <variation>A</variation>
    <location>
        <position position="96"/>
    </location>
</feature>
<feature type="mutagenesis site" description="Partial inactivation; 63% residual activity." evidence="2">
    <original>W</original>
    <variation>F</variation>
    <location>
        <position position="96"/>
    </location>
</feature>
<feature type="mutagenesis site" description="About 25% decrease in activity." evidence="2">
    <original>F</original>
    <variation>S</variation>
    <location>
        <position position="103"/>
    </location>
</feature>
<feature type="mutagenesis site" description="Significant inactivation; 5% residual acti vity." evidence="2">
    <original>L</original>
    <variation>R</variation>
    <location>
        <position position="136"/>
    </location>
</feature>
<feature type="mutagenesis site" description="Almost complete inactivation; 1-3% residual activity." evidence="2">
    <original>H</original>
    <variation>L</variation>
    <location>
        <position position="140"/>
    </location>
</feature>
<feature type="mutagenesis site" description="About 50% decrease in activity." evidence="2">
    <original>F</original>
    <variation>S</variation>
    <location>
        <position position="148"/>
    </location>
</feature>
<feature type="mutagenesis site" description="46% decrease in activity." evidence="2">
    <original>L</original>
    <variation>R</variation>
    <location>
        <position position="165"/>
    </location>
</feature>
<feature type="mutagenesis site" description="No loss of activity; 90% residual activity." evidence="2">
    <original>F</original>
    <variation>S</variation>
    <location>
        <position position="183"/>
    </location>
</feature>
<feature type="mutagenesis site" description="No loss of activity; 90-97% residual activity." evidence="2">
    <original>Y</original>
    <variation>L</variation>
    <location>
        <position position="207"/>
    </location>
</feature>
<feature type="helix" evidence="14">
    <location>
        <begin position="4"/>
        <end position="6"/>
    </location>
</feature>
<feature type="helix" evidence="13">
    <location>
        <begin position="20"/>
        <end position="27"/>
    </location>
</feature>
<feature type="turn" evidence="12">
    <location>
        <begin position="28"/>
        <end position="30"/>
    </location>
</feature>
<feature type="helix" evidence="13">
    <location>
        <begin position="31"/>
        <end position="36"/>
    </location>
</feature>
<feature type="helix" evidence="13">
    <location>
        <begin position="40"/>
        <end position="42"/>
    </location>
</feature>
<feature type="helix" evidence="13">
    <location>
        <begin position="43"/>
        <end position="62"/>
    </location>
</feature>
<feature type="turn" evidence="13">
    <location>
        <begin position="64"/>
        <end position="67"/>
    </location>
</feature>
<feature type="helix" evidence="13">
    <location>
        <begin position="70"/>
        <end position="81"/>
    </location>
</feature>
<feature type="helix" evidence="13">
    <location>
        <begin position="82"/>
        <end position="84"/>
    </location>
</feature>
<feature type="helix" evidence="13">
    <location>
        <begin position="89"/>
        <end position="112"/>
    </location>
</feature>
<feature type="strand" evidence="11">
    <location>
        <begin position="118"/>
        <end position="120"/>
    </location>
</feature>
<feature type="helix" evidence="13">
    <location>
        <begin position="125"/>
        <end position="135"/>
    </location>
</feature>
<feature type="helix" evidence="13">
    <location>
        <begin position="137"/>
        <end position="139"/>
    </location>
</feature>
<feature type="helix" evidence="13">
    <location>
        <begin position="142"/>
        <end position="151"/>
    </location>
</feature>
<feature type="helix" evidence="13">
    <location>
        <begin position="152"/>
        <end position="154"/>
    </location>
</feature>
<feature type="helix" evidence="13">
    <location>
        <begin position="158"/>
        <end position="165"/>
    </location>
</feature>
<feature type="turn" evidence="13">
    <location>
        <begin position="166"/>
        <end position="168"/>
    </location>
</feature>
<feature type="helix" evidence="13">
    <location>
        <begin position="173"/>
        <end position="200"/>
    </location>
</feature>
<organism>
    <name type="scientific">Homo sapiens</name>
    <name type="common">Human</name>
    <dbReference type="NCBI Taxonomy" id="9606"/>
    <lineage>
        <taxon>Eukaryota</taxon>
        <taxon>Metazoa</taxon>
        <taxon>Chordata</taxon>
        <taxon>Craniata</taxon>
        <taxon>Vertebrata</taxon>
        <taxon>Euteleostomi</taxon>
        <taxon>Mammalia</taxon>
        <taxon>Eutheria</taxon>
        <taxon>Euarchontoglires</taxon>
        <taxon>Primates</taxon>
        <taxon>Haplorrhini</taxon>
        <taxon>Catarrhini</taxon>
        <taxon>Hominidae</taxon>
        <taxon>Homo</taxon>
    </lineage>
</organism>
<dbReference type="EMBL" id="AF209704">
    <property type="protein sequence ID" value="AAF33210.1"/>
    <property type="molecule type" value="mRNA"/>
</dbReference>
<dbReference type="EMBL" id="AY372530">
    <property type="protein sequence ID" value="AAR85984.1"/>
    <property type="molecule type" value="mRNA"/>
</dbReference>
<dbReference type="EMBL" id="AY372531">
    <property type="protein sequence ID" value="AAR85985.1"/>
    <property type="molecule type" value="mRNA"/>
</dbReference>
<dbReference type="EMBL" id="AY372532">
    <property type="protein sequence ID" value="AAR87373.1"/>
    <property type="molecule type" value="mRNA"/>
</dbReference>
<dbReference type="EMBL" id="AK313457">
    <property type="protein sequence ID" value="BAG36244.1"/>
    <property type="molecule type" value="mRNA"/>
</dbReference>
<dbReference type="EMBL" id="CH471054">
    <property type="protein sequence ID" value="EAW97880.1"/>
    <property type="molecule type" value="Genomic_DNA"/>
</dbReference>
<dbReference type="EMBL" id="BC009932">
    <property type="protein sequence ID" value="AAH09932.1"/>
    <property type="molecule type" value="mRNA"/>
</dbReference>
<dbReference type="CCDS" id="CCDS9136.1"/>
<dbReference type="RefSeq" id="NP_057517.1">
    <property type="nucleotide sequence ID" value="NM_016433.4"/>
</dbReference>
<dbReference type="PDB" id="1SWX">
    <property type="method" value="X-ray"/>
    <property type="resolution" value="1.65 A"/>
    <property type="chains" value="A=1-209"/>
</dbReference>
<dbReference type="PDB" id="1SX6">
    <property type="method" value="X-ray"/>
    <property type="resolution" value="1.95 A"/>
    <property type="chains" value="A=1-209"/>
</dbReference>
<dbReference type="PDB" id="2EUK">
    <property type="method" value="X-ray"/>
    <property type="resolution" value="1.85 A"/>
    <property type="chains" value="A=1-209"/>
</dbReference>
<dbReference type="PDB" id="2EUM">
    <property type="method" value="X-ray"/>
    <property type="resolution" value="2.30 A"/>
    <property type="chains" value="A=1-209"/>
</dbReference>
<dbReference type="PDB" id="2EVD">
    <property type="method" value="X-ray"/>
    <property type="resolution" value="2.00 A"/>
    <property type="chains" value="A=1-209"/>
</dbReference>
<dbReference type="PDB" id="2EVL">
    <property type="method" value="X-ray"/>
    <property type="resolution" value="2.20 A"/>
    <property type="chains" value="A=1-209"/>
</dbReference>
<dbReference type="PDB" id="2EVS">
    <property type="method" value="X-ray"/>
    <property type="resolution" value="2.20 A"/>
    <property type="chains" value="A/E=1-209"/>
</dbReference>
<dbReference type="PDB" id="2EVT">
    <property type="method" value="X-ray"/>
    <property type="resolution" value="1.99 A"/>
    <property type="chains" value="A=1-209"/>
</dbReference>
<dbReference type="PDB" id="3RIC">
    <property type="method" value="X-ray"/>
    <property type="resolution" value="2.10 A"/>
    <property type="chains" value="A=1-209"/>
</dbReference>
<dbReference type="PDB" id="3RWV">
    <property type="method" value="X-ray"/>
    <property type="resolution" value="1.50 A"/>
    <property type="chains" value="A/B=1-209"/>
</dbReference>
<dbReference type="PDB" id="3RZN">
    <property type="method" value="X-ray"/>
    <property type="resolution" value="1.10 A"/>
    <property type="chains" value="A=1-209"/>
</dbReference>
<dbReference type="PDB" id="3S0I">
    <property type="method" value="X-ray"/>
    <property type="resolution" value="1.50 A"/>
    <property type="chains" value="A=1-209"/>
</dbReference>
<dbReference type="PDB" id="3S0K">
    <property type="method" value="X-ray"/>
    <property type="resolution" value="1.40 A"/>
    <property type="chains" value="A=1-209"/>
</dbReference>
<dbReference type="PDB" id="4GH0">
    <property type="method" value="X-ray"/>
    <property type="resolution" value="1.35 A"/>
    <property type="chains" value="A=1-209"/>
</dbReference>
<dbReference type="PDB" id="4GHP">
    <property type="method" value="X-ray"/>
    <property type="resolution" value="1.90 A"/>
    <property type="chains" value="A=1-209"/>
</dbReference>
<dbReference type="PDB" id="4GHS">
    <property type="method" value="X-ray"/>
    <property type="resolution" value="3.20 A"/>
    <property type="chains" value="A/B=1-209"/>
</dbReference>
<dbReference type="PDB" id="4GIX">
    <property type="method" value="X-ray"/>
    <property type="resolution" value="1.80 A"/>
    <property type="chains" value="A=1-209"/>
</dbReference>
<dbReference type="PDB" id="4GJQ">
    <property type="method" value="X-ray"/>
    <property type="resolution" value="2.00 A"/>
    <property type="chains" value="A/B=1-209"/>
</dbReference>
<dbReference type="PDB" id="4GVT">
    <property type="method" value="X-ray"/>
    <property type="resolution" value="2.90 A"/>
    <property type="chains" value="A=1-209"/>
</dbReference>
<dbReference type="PDB" id="4GXD">
    <property type="method" value="X-ray"/>
    <property type="resolution" value="2.10 A"/>
    <property type="chains" value="A=1-209"/>
</dbReference>
<dbReference type="PDB" id="4GXG">
    <property type="method" value="X-ray"/>
    <property type="resolution" value="2.40 A"/>
    <property type="chains" value="A/B/D/E=1-209"/>
</dbReference>
<dbReference type="PDB" id="4H2Z">
    <property type="method" value="X-ray"/>
    <property type="resolution" value="1.45 A"/>
    <property type="chains" value="A=1-209"/>
</dbReference>
<dbReference type="PDBsum" id="1SWX"/>
<dbReference type="PDBsum" id="1SX6"/>
<dbReference type="PDBsum" id="2EUK"/>
<dbReference type="PDBsum" id="2EUM"/>
<dbReference type="PDBsum" id="2EVD"/>
<dbReference type="PDBsum" id="2EVL"/>
<dbReference type="PDBsum" id="2EVS"/>
<dbReference type="PDBsum" id="2EVT"/>
<dbReference type="PDBsum" id="3RIC"/>
<dbReference type="PDBsum" id="3RWV"/>
<dbReference type="PDBsum" id="3RZN"/>
<dbReference type="PDBsum" id="3S0I"/>
<dbReference type="PDBsum" id="3S0K"/>
<dbReference type="PDBsum" id="4GH0"/>
<dbReference type="PDBsum" id="4GHP"/>
<dbReference type="PDBsum" id="4GHS"/>
<dbReference type="PDBsum" id="4GIX"/>
<dbReference type="PDBsum" id="4GJQ"/>
<dbReference type="PDBsum" id="4GVT"/>
<dbReference type="PDBsum" id="4GXD"/>
<dbReference type="PDBsum" id="4GXG"/>
<dbReference type="PDBsum" id="4H2Z"/>
<dbReference type="SMR" id="Q9NZD2"/>
<dbReference type="BioGRID" id="119392">
    <property type="interactions" value="35"/>
</dbReference>
<dbReference type="DIP" id="DIP-59418N"/>
<dbReference type="FunCoup" id="Q9NZD2">
    <property type="interactions" value="742"/>
</dbReference>
<dbReference type="IntAct" id="Q9NZD2">
    <property type="interactions" value="11"/>
</dbReference>
<dbReference type="STRING" id="9606.ENSP00000315263"/>
<dbReference type="DrugBank" id="DB03600">
    <property type="generic name" value="Capric acid"/>
</dbReference>
<dbReference type="DrugBank" id="DB04465">
    <property type="generic name" value="Lactose"/>
</dbReference>
<dbReference type="DrugBank" id="DB03017">
    <property type="generic name" value="Lauric acid"/>
</dbReference>
<dbReference type="DrugBank" id="DB03203">
    <property type="generic name" value="Sphingosine"/>
</dbReference>
<dbReference type="iPTMnet" id="Q9NZD2"/>
<dbReference type="PhosphoSitePlus" id="Q9NZD2"/>
<dbReference type="SwissPalm" id="Q9NZD2"/>
<dbReference type="BioMuta" id="GLTP"/>
<dbReference type="DMDM" id="20138399"/>
<dbReference type="jPOST" id="Q9NZD2"/>
<dbReference type="MassIVE" id="Q9NZD2"/>
<dbReference type="PaxDb" id="9606-ENSP00000315263"/>
<dbReference type="PeptideAtlas" id="Q9NZD2"/>
<dbReference type="ProteomicsDB" id="83375"/>
<dbReference type="Pumba" id="Q9NZD2"/>
<dbReference type="Antibodypedia" id="30918">
    <property type="antibodies" value="110 antibodies from 19 providers"/>
</dbReference>
<dbReference type="DNASU" id="51228"/>
<dbReference type="Ensembl" id="ENST00000318348.9">
    <property type="protein sequence ID" value="ENSP00000315263.3"/>
    <property type="gene ID" value="ENSG00000139433.11"/>
</dbReference>
<dbReference type="GeneID" id="51228"/>
<dbReference type="KEGG" id="hsa:51228"/>
<dbReference type="MANE-Select" id="ENST00000318348.9">
    <property type="protein sequence ID" value="ENSP00000315263.3"/>
    <property type="RefSeq nucleotide sequence ID" value="NM_016433.4"/>
    <property type="RefSeq protein sequence ID" value="NP_057517.1"/>
</dbReference>
<dbReference type="UCSC" id="uc001tpm.3">
    <property type="organism name" value="human"/>
</dbReference>
<dbReference type="AGR" id="HGNC:24867"/>
<dbReference type="CTD" id="51228"/>
<dbReference type="DisGeNET" id="51228"/>
<dbReference type="GeneCards" id="GLTP"/>
<dbReference type="HGNC" id="HGNC:24867">
    <property type="gene designation" value="GLTP"/>
</dbReference>
<dbReference type="HPA" id="ENSG00000139433">
    <property type="expression patterns" value="Tissue enhanced (esophagus, skin)"/>
</dbReference>
<dbReference type="MIM" id="608949">
    <property type="type" value="gene"/>
</dbReference>
<dbReference type="neXtProt" id="NX_Q9NZD2"/>
<dbReference type="OpenTargets" id="ENSG00000139433"/>
<dbReference type="PharmGKB" id="PA142671729"/>
<dbReference type="VEuPathDB" id="HostDB:ENSG00000139433"/>
<dbReference type="eggNOG" id="KOG3221">
    <property type="taxonomic scope" value="Eukaryota"/>
</dbReference>
<dbReference type="GeneTree" id="ENSGT00940000155182"/>
<dbReference type="HOGENOM" id="CLU_079400_2_1_1"/>
<dbReference type="InParanoid" id="Q9NZD2"/>
<dbReference type="OMA" id="EMHGAEW"/>
<dbReference type="OrthoDB" id="205255at2759"/>
<dbReference type="PAN-GO" id="Q9NZD2">
    <property type="GO annotations" value="5 GO annotations based on evolutionary models"/>
</dbReference>
<dbReference type="PhylomeDB" id="Q9NZD2"/>
<dbReference type="TreeFam" id="TF317467"/>
<dbReference type="PathwayCommons" id="Q9NZD2"/>
<dbReference type="Reactome" id="R-HSA-9845576">
    <property type="pathway name" value="Glycosphingolipid transport"/>
</dbReference>
<dbReference type="SignaLink" id="Q9NZD2"/>
<dbReference type="BioGRID-ORCS" id="51228">
    <property type="hits" value="43 hits in 1165 CRISPR screens"/>
</dbReference>
<dbReference type="ChiTaRS" id="GLTP">
    <property type="organism name" value="human"/>
</dbReference>
<dbReference type="EvolutionaryTrace" id="Q9NZD2"/>
<dbReference type="GeneWiki" id="GLTP"/>
<dbReference type="GenomeRNAi" id="51228"/>
<dbReference type="Pharos" id="Q9NZD2">
    <property type="development level" value="Tbio"/>
</dbReference>
<dbReference type="PRO" id="PR:Q9NZD2"/>
<dbReference type="Proteomes" id="UP000005640">
    <property type="component" value="Chromosome 12"/>
</dbReference>
<dbReference type="RNAct" id="Q9NZD2">
    <property type="molecule type" value="protein"/>
</dbReference>
<dbReference type="Bgee" id="ENSG00000139433">
    <property type="expression patterns" value="Expressed in upper arm skin and 191 other cell types or tissues"/>
</dbReference>
<dbReference type="ExpressionAtlas" id="Q9NZD2">
    <property type="expression patterns" value="baseline and differential"/>
</dbReference>
<dbReference type="GO" id="GO:0005829">
    <property type="term" value="C:cytosol"/>
    <property type="evidence" value="ECO:0000314"/>
    <property type="project" value="BHF-UCL"/>
</dbReference>
<dbReference type="GO" id="GO:1902387">
    <property type="term" value="F:ceramide 1-phosphate binding"/>
    <property type="evidence" value="ECO:0000318"/>
    <property type="project" value="GO_Central"/>
</dbReference>
<dbReference type="GO" id="GO:1902388">
    <property type="term" value="F:ceramide 1-phosphate transfer activity"/>
    <property type="evidence" value="ECO:0000318"/>
    <property type="project" value="GO_Central"/>
</dbReference>
<dbReference type="GO" id="GO:0051861">
    <property type="term" value="F:glycolipid binding"/>
    <property type="evidence" value="ECO:0000314"/>
    <property type="project" value="HGNC-UCL"/>
</dbReference>
<dbReference type="GO" id="GO:0017089">
    <property type="term" value="F:glycolipid transfer activity"/>
    <property type="evidence" value="ECO:0000304"/>
    <property type="project" value="Reactome"/>
</dbReference>
<dbReference type="GO" id="GO:0042802">
    <property type="term" value="F:identical protein binding"/>
    <property type="evidence" value="ECO:0000353"/>
    <property type="project" value="IntAct"/>
</dbReference>
<dbReference type="GO" id="GO:0008289">
    <property type="term" value="F:lipid binding"/>
    <property type="evidence" value="ECO:0000314"/>
    <property type="project" value="HGNC-UCL"/>
</dbReference>
<dbReference type="GO" id="GO:0120013">
    <property type="term" value="F:lipid transfer activity"/>
    <property type="evidence" value="ECO:0000314"/>
    <property type="project" value="BHF-UCL"/>
</dbReference>
<dbReference type="GO" id="GO:0035627">
    <property type="term" value="P:ceramide transport"/>
    <property type="evidence" value="ECO:0000318"/>
    <property type="project" value="GO_Central"/>
</dbReference>
<dbReference type="GO" id="GO:0120009">
    <property type="term" value="P:intermembrane lipid transfer"/>
    <property type="evidence" value="ECO:0000314"/>
    <property type="project" value="BHF-UCL"/>
</dbReference>
<dbReference type="GO" id="GO:0035902">
    <property type="term" value="P:response to immobilization stress"/>
    <property type="evidence" value="ECO:0007669"/>
    <property type="project" value="Ensembl"/>
</dbReference>
<dbReference type="FunFam" id="1.10.3520.10:FF:000003">
    <property type="entry name" value="glycolipid transfer protein"/>
    <property type="match status" value="1"/>
</dbReference>
<dbReference type="Gene3D" id="1.10.3520.10">
    <property type="entry name" value="Glycolipid transfer protein"/>
    <property type="match status" value="1"/>
</dbReference>
<dbReference type="InterPro" id="IPR036497">
    <property type="entry name" value="GLTP_sf"/>
</dbReference>
<dbReference type="InterPro" id="IPR014830">
    <property type="entry name" value="Glycolipid_transfer_prot_dom"/>
</dbReference>
<dbReference type="PANTHER" id="PTHR10219:SF97">
    <property type="entry name" value="GLYCOLIPID TRANSFER PROTEIN"/>
    <property type="match status" value="1"/>
</dbReference>
<dbReference type="PANTHER" id="PTHR10219">
    <property type="entry name" value="GLYCOLIPID TRANSFER PROTEIN-RELATED"/>
    <property type="match status" value="1"/>
</dbReference>
<dbReference type="Pfam" id="PF08718">
    <property type="entry name" value="GLTP"/>
    <property type="match status" value="1"/>
</dbReference>
<dbReference type="SUPFAM" id="SSF110004">
    <property type="entry name" value="Glycolipid transfer protein, GLTP"/>
    <property type="match status" value="1"/>
</dbReference>
<comment type="function">
    <text evidence="2 3 5 6">Accelerates the intermembrane transfer of various glycolipids. Catalyzes the transfer of various glycosphingolipids between membranes but does not catalyze the transfer of phospholipids. May be involved in the intracellular translocation of glucosylceramides.</text>
</comment>
<comment type="subunit">
    <text evidence="2 4">Monomer.</text>
</comment>
<comment type="interaction">
    <interactant intactId="EBI-2859814">
        <id>Q9NZD2</id>
    </interactant>
    <interactant intactId="EBI-2548702">
        <id>Q96DZ9</id>
        <label>CMTM5</label>
    </interactant>
    <organismsDiffer>false</organismsDiffer>
    <experiments>4</experiments>
</comment>
<comment type="interaction">
    <interactant intactId="EBI-2859814">
        <id>Q9NZD2</id>
    </interactant>
    <interactant intactId="EBI-2859814">
        <id>Q9NZD2</id>
        <label>GLTP</label>
    </interactant>
    <organismsDiffer>false</organismsDiffer>
    <experiments>2</experiments>
</comment>
<comment type="subcellular location">
    <subcellularLocation>
        <location evidence="5">Cytoplasm</location>
    </subcellularLocation>
</comment>
<comment type="tissue specificity">
    <text evidence="5 6">Detected in fibroblasts (at protein level). Detected in fibroblasts and in various cancer cell lines.</text>
</comment>
<comment type="similarity">
    <text evidence="8">Belongs to the GLTP family.</text>
</comment>